<feature type="initiator methionine" description="Removed" evidence="1">
    <location>
        <position position="1"/>
    </location>
</feature>
<feature type="chain" id="PRO_0000139410" description="3-mercaptopyruvate sulfurtransferase">
    <location>
        <begin position="2"/>
        <end position="281"/>
    </location>
</feature>
<feature type="domain" description="Rhodanese 1" evidence="4">
    <location>
        <begin position="17"/>
        <end position="135"/>
    </location>
</feature>
<feature type="domain" description="Rhodanese 2" evidence="4">
    <location>
        <begin position="165"/>
        <end position="278"/>
    </location>
</feature>
<feature type="region of interest" description="Substrate specificity" evidence="3">
    <location>
        <begin position="238"/>
        <end position="244"/>
    </location>
</feature>
<feature type="active site" description="Cysteine persulfide intermediate" evidence="4">
    <location>
        <position position="238"/>
    </location>
</feature>
<feature type="binding site" evidence="1">
    <location>
        <position position="179"/>
    </location>
    <ligand>
        <name>substrate</name>
    </ligand>
</feature>
<dbReference type="EC" id="2.8.1.2" evidence="2"/>
<dbReference type="EMBL" id="AE005174">
    <property type="protein sequence ID" value="AAG57635.1"/>
    <property type="status" value="ALT_INIT"/>
    <property type="molecule type" value="Genomic_DNA"/>
</dbReference>
<dbReference type="EMBL" id="BA000007">
    <property type="protein sequence ID" value="BAB36810.2"/>
    <property type="molecule type" value="Genomic_DNA"/>
</dbReference>
<dbReference type="PIR" id="C91052">
    <property type="entry name" value="C91052"/>
</dbReference>
<dbReference type="PIR" id="G85896">
    <property type="entry name" value="G85896"/>
</dbReference>
<dbReference type="RefSeq" id="NP_311414.2">
    <property type="nucleotide sequence ID" value="NC_002695.1"/>
</dbReference>
<dbReference type="RefSeq" id="WP_000108625.1">
    <property type="nucleotide sequence ID" value="NZ_VOAI01000001.1"/>
</dbReference>
<dbReference type="SMR" id="P58388"/>
<dbReference type="STRING" id="155864.Z3788"/>
<dbReference type="GeneID" id="915202"/>
<dbReference type="KEGG" id="ece:Z3788"/>
<dbReference type="KEGG" id="ecs:ECs_3387"/>
<dbReference type="PATRIC" id="fig|386585.9.peg.3538"/>
<dbReference type="eggNOG" id="COG2897">
    <property type="taxonomic scope" value="Bacteria"/>
</dbReference>
<dbReference type="HOGENOM" id="CLU_031618_3_0_6"/>
<dbReference type="OMA" id="NNNWFAS"/>
<dbReference type="Proteomes" id="UP000000558">
    <property type="component" value="Chromosome"/>
</dbReference>
<dbReference type="Proteomes" id="UP000002519">
    <property type="component" value="Chromosome"/>
</dbReference>
<dbReference type="GO" id="GO:0005829">
    <property type="term" value="C:cytosol"/>
    <property type="evidence" value="ECO:0007669"/>
    <property type="project" value="TreeGrafter"/>
</dbReference>
<dbReference type="GO" id="GO:0016784">
    <property type="term" value="F:3-mercaptopyruvate sulfurtransferase activity"/>
    <property type="evidence" value="ECO:0007669"/>
    <property type="project" value="UniProtKB-EC"/>
</dbReference>
<dbReference type="GO" id="GO:0004792">
    <property type="term" value="F:thiosulfate-cyanide sulfurtransferase activity"/>
    <property type="evidence" value="ECO:0007669"/>
    <property type="project" value="InterPro"/>
</dbReference>
<dbReference type="CDD" id="cd01448">
    <property type="entry name" value="TST_Repeat_1"/>
    <property type="match status" value="1"/>
</dbReference>
<dbReference type="CDD" id="cd01449">
    <property type="entry name" value="TST_Repeat_2"/>
    <property type="match status" value="1"/>
</dbReference>
<dbReference type="FunFam" id="3.40.250.10:FF:000001">
    <property type="entry name" value="Sulfurtransferase"/>
    <property type="match status" value="1"/>
</dbReference>
<dbReference type="FunFam" id="3.40.250.10:FF:000015">
    <property type="entry name" value="Sulfurtransferase"/>
    <property type="match status" value="1"/>
</dbReference>
<dbReference type="Gene3D" id="3.40.250.10">
    <property type="entry name" value="Rhodanese-like domain"/>
    <property type="match status" value="2"/>
</dbReference>
<dbReference type="InterPro" id="IPR001763">
    <property type="entry name" value="Rhodanese-like_dom"/>
</dbReference>
<dbReference type="InterPro" id="IPR036873">
    <property type="entry name" value="Rhodanese-like_dom_sf"/>
</dbReference>
<dbReference type="InterPro" id="IPR001307">
    <property type="entry name" value="Thiosulphate_STrfase_CS"/>
</dbReference>
<dbReference type="InterPro" id="IPR045078">
    <property type="entry name" value="TST/MPST-like"/>
</dbReference>
<dbReference type="NCBIfam" id="NF008557">
    <property type="entry name" value="PRK11493.1"/>
    <property type="match status" value="1"/>
</dbReference>
<dbReference type="PANTHER" id="PTHR11364:SF27">
    <property type="entry name" value="SULFURTRANSFERASE"/>
    <property type="match status" value="1"/>
</dbReference>
<dbReference type="PANTHER" id="PTHR11364">
    <property type="entry name" value="THIOSULFATE SULFERTANSFERASE"/>
    <property type="match status" value="1"/>
</dbReference>
<dbReference type="Pfam" id="PF00581">
    <property type="entry name" value="Rhodanese"/>
    <property type="match status" value="2"/>
</dbReference>
<dbReference type="SMART" id="SM00450">
    <property type="entry name" value="RHOD"/>
    <property type="match status" value="2"/>
</dbReference>
<dbReference type="SUPFAM" id="SSF52821">
    <property type="entry name" value="Rhodanese/Cell cycle control phosphatase"/>
    <property type="match status" value="2"/>
</dbReference>
<dbReference type="PROSITE" id="PS00380">
    <property type="entry name" value="RHODANESE_1"/>
    <property type="match status" value="1"/>
</dbReference>
<dbReference type="PROSITE" id="PS00683">
    <property type="entry name" value="RHODANESE_2"/>
    <property type="match status" value="1"/>
</dbReference>
<dbReference type="PROSITE" id="PS50206">
    <property type="entry name" value="RHODANESE_3"/>
    <property type="match status" value="2"/>
</dbReference>
<name>THTM_ECO57</name>
<reference key="1">
    <citation type="journal article" date="2001" name="Nature">
        <title>Genome sequence of enterohaemorrhagic Escherichia coli O157:H7.</title>
        <authorList>
            <person name="Perna N.T."/>
            <person name="Plunkett G. III"/>
            <person name="Burland V."/>
            <person name="Mau B."/>
            <person name="Glasner J.D."/>
            <person name="Rose D.J."/>
            <person name="Mayhew G.F."/>
            <person name="Evans P.S."/>
            <person name="Gregor J."/>
            <person name="Kirkpatrick H.A."/>
            <person name="Posfai G."/>
            <person name="Hackett J."/>
            <person name="Klink S."/>
            <person name="Boutin A."/>
            <person name="Shao Y."/>
            <person name="Miller L."/>
            <person name="Grotbeck E.J."/>
            <person name="Davis N.W."/>
            <person name="Lim A."/>
            <person name="Dimalanta E.T."/>
            <person name="Potamousis K."/>
            <person name="Apodaca J."/>
            <person name="Anantharaman T.S."/>
            <person name="Lin J."/>
            <person name="Yen G."/>
            <person name="Schwartz D.C."/>
            <person name="Welch R.A."/>
            <person name="Blattner F.R."/>
        </authorList>
    </citation>
    <scope>NUCLEOTIDE SEQUENCE [LARGE SCALE GENOMIC DNA]</scope>
    <source>
        <strain>O157:H7 / EDL933 / ATCC 700927 / EHEC</strain>
    </source>
</reference>
<reference key="2">
    <citation type="journal article" date="2001" name="DNA Res.">
        <title>Complete genome sequence of enterohemorrhagic Escherichia coli O157:H7 and genomic comparison with a laboratory strain K-12.</title>
        <authorList>
            <person name="Hayashi T."/>
            <person name="Makino K."/>
            <person name="Ohnishi M."/>
            <person name="Kurokawa K."/>
            <person name="Ishii K."/>
            <person name="Yokoyama K."/>
            <person name="Han C.-G."/>
            <person name="Ohtsubo E."/>
            <person name="Nakayama K."/>
            <person name="Murata T."/>
            <person name="Tanaka M."/>
            <person name="Tobe T."/>
            <person name="Iida T."/>
            <person name="Takami H."/>
            <person name="Honda T."/>
            <person name="Sasakawa C."/>
            <person name="Ogasawara N."/>
            <person name="Yasunaga T."/>
            <person name="Kuhara S."/>
            <person name="Shiba T."/>
            <person name="Hattori M."/>
            <person name="Shinagawa H."/>
        </authorList>
    </citation>
    <scope>NUCLEOTIDE SEQUENCE [LARGE SCALE GENOMIC DNA]</scope>
    <source>
        <strain>O157:H7 / Sakai / RIMD 0509952 / EHEC</strain>
    </source>
</reference>
<proteinExistence type="inferred from homology"/>
<comment type="function">
    <text evidence="2">Catalyzes the transfer of sulfur from 3-mercaptopyruvate to a thiol-containing acceptor to form an intramolecular disulfide releasing hydrogen sulfide and pyruvate.</text>
</comment>
<comment type="catalytic activity">
    <reaction evidence="2">
        <text>2-oxo-3-sulfanylpropanoate + [thioredoxin]-dithiol = [thioredoxin]-disulfide + hydrogen sulfide + pyruvate + H(+)</text>
        <dbReference type="Rhea" id="RHEA:21740"/>
        <dbReference type="Rhea" id="RHEA-COMP:10698"/>
        <dbReference type="Rhea" id="RHEA-COMP:10700"/>
        <dbReference type="ChEBI" id="CHEBI:15361"/>
        <dbReference type="ChEBI" id="CHEBI:15378"/>
        <dbReference type="ChEBI" id="CHEBI:29919"/>
        <dbReference type="ChEBI" id="CHEBI:29950"/>
        <dbReference type="ChEBI" id="CHEBI:50058"/>
        <dbReference type="ChEBI" id="CHEBI:57678"/>
        <dbReference type="EC" id="2.8.1.2"/>
    </reaction>
    <physiologicalReaction direction="left-to-right" evidence="2">
        <dbReference type="Rhea" id="RHEA:21741"/>
    </physiologicalReaction>
</comment>
<comment type="subcellular location">
    <subcellularLocation>
        <location evidence="5">Cytoplasm</location>
    </subcellularLocation>
</comment>
<comment type="domain">
    <text>The N-terminal region is the non-catalytic domain; the C-terminus contains the active-site cysteine residue and the CGSGVTA motif probably responsible for substrate specificity.</text>
</comment>
<comment type="domain">
    <text evidence="1">Contains two rhodanese domains with different primary structures but with near identical secondary structure conformations suggesting a common evolutionary origin. Only the C-terminal rhodanese domain contains the catalytic cysteine residue (By similarity).</text>
</comment>
<comment type="sequence caution" evidence="5">
    <conflict type="erroneous initiation">
        <sequence resource="EMBL-CDS" id="AAG57635"/>
    </conflict>
    <text>Extended N-terminus.</text>
</comment>
<gene>
    <name type="primary">sseA</name>
    <name type="ordered locus">Z3788</name>
    <name type="ordered locus">ECs3387</name>
</gene>
<sequence>MSTTWFVGADWLAEHIDDPEIQIIDARMASPGQEDRNVAQEYLNGHIPGAVFFDIEALSDHTSPLPHMLPRPETFAVAMRELGVNQDKHLIVYDEGNLFSAPRAWWMLRTFGVEKVSILGGGLAGWQRDDLLLEEGAVELPEGEFNAAFNPEAVVKVTDVLLASHENTAQIIDARPAARFNAEVDEPRPGLRRGHIPGALNVPWTELVREGELKTTDELDAIFFGRGVSYDKPIIVSCGSGVTAAVVLLALATLDVPNVKLYDGAWSEWGARADLPVEPLK</sequence>
<keyword id="KW-0963">Cytoplasm</keyword>
<keyword id="KW-1185">Reference proteome</keyword>
<keyword id="KW-0677">Repeat</keyword>
<keyword id="KW-0808">Transferase</keyword>
<evidence type="ECO:0000250" key="1"/>
<evidence type="ECO:0000250" key="2">
    <source>
        <dbReference type="UniProtKB" id="P31142"/>
    </source>
</evidence>
<evidence type="ECO:0000255" key="3"/>
<evidence type="ECO:0000255" key="4">
    <source>
        <dbReference type="PROSITE-ProRule" id="PRU00173"/>
    </source>
</evidence>
<evidence type="ECO:0000305" key="5"/>
<organism>
    <name type="scientific">Escherichia coli O157:H7</name>
    <dbReference type="NCBI Taxonomy" id="83334"/>
    <lineage>
        <taxon>Bacteria</taxon>
        <taxon>Pseudomonadati</taxon>
        <taxon>Pseudomonadota</taxon>
        <taxon>Gammaproteobacteria</taxon>
        <taxon>Enterobacterales</taxon>
        <taxon>Enterobacteriaceae</taxon>
        <taxon>Escherichia</taxon>
    </lineage>
</organism>
<accession>P58388</accession>
<protein>
    <recommendedName>
        <fullName evidence="2">3-mercaptopyruvate sulfurtransferase</fullName>
        <shortName evidence="2">MST</shortName>
        <ecNumber evidence="2">2.8.1.2</ecNumber>
    </recommendedName>
    <alternativeName>
        <fullName evidence="2">Rhodanese-like protein</fullName>
    </alternativeName>
</protein>